<reference evidence="14" key="1">
    <citation type="journal article" date="2021" name="Toxicon">
        <title>Novel components of Tityus serrulatus venom: a transcriptomic approach.</title>
        <authorList>
            <person name="Kalapothakis Y."/>
            <person name="Miranda K."/>
            <person name="Pereira A.H."/>
            <person name="Witt A.S.A."/>
            <person name="Marani C."/>
            <person name="Martins A.P."/>
            <person name="Leal H.G."/>
            <person name="Campos-Junior E."/>
            <person name="Pimenta A.M.C."/>
            <person name="Borges A."/>
            <person name="Chavez-Olortegui C."/>
            <person name="Kalapothakis E."/>
        </authorList>
    </citation>
    <scope>NUCLEOTIDE SEQUENCE [MRNA]</scope>
    <source>
        <tissue>Telson</tissue>
    </source>
</reference>
<reference key="2">
    <citation type="journal article" date="1994" name="Proc. Natl. Acad. Sci. U.S.A.">
        <title>Tityustoxin K alpha blocks voltage-gated noninactivating K+ channels and unblocks inactivating K+ channels blocked by alpha-dendrotoxin in synaptosomes.</title>
        <authorList>
            <person name="Rogowski R.S."/>
            <person name="Krueger B.K."/>
            <person name="Collins J.H."/>
            <person name="Blaustein M.P."/>
        </authorList>
    </citation>
    <scope>PROTEIN SEQUENCE OF 23-59</scope>
    <scope>FUNCTION</scope>
    <scope>SUBCELLULAR LOCATION</scope>
    <source>
        <tissue>Venom</tissue>
    </source>
</reference>
<reference key="3">
    <citation type="journal article" date="1996" name="Proc. Natl. Acad. Sci. U.S.A.">
        <authorList>
            <person name="Rogowski R.S."/>
            <person name="Krueger B.K."/>
            <person name="Collins J.H."/>
            <person name="Blaustein M.P."/>
        </authorList>
    </citation>
    <scope>ERRATUM OF PUBMED:7509073</scope>
</reference>
<reference key="4">
    <citation type="journal article" date="1982" name="Carlsberg Res. Commun.">
        <title>The primary structure of noxiustoxin. A K channel blocking peptide, purified from the venom of the scorpion Centruroides noxius Hoffmann.</title>
        <authorList>
            <person name="Possani L.D."/>
            <person name="Martin B.M."/>
            <person name="Svendsen I."/>
        </authorList>
    </citation>
    <scope>PROTEIN SEQUENCE OF 23-52</scope>
    <scope>SUBCELLULAR LOCATION</scope>
    <source>
        <tissue>Venom</tissue>
    </source>
</reference>
<reference key="5">
    <citation type="journal article" date="2014" name="Toxins">
        <title>Electrophysiological characterization of Ts6 and Ts7, K+ channel toxins isolated through an improved Tityus serrulatus venom purification procedure.</title>
        <authorList>
            <person name="Cerni F.A."/>
            <person name="Pucca M.B."/>
            <person name="Peigneur S."/>
            <person name="Cremonez C.M."/>
            <person name="Bordon K.C."/>
            <person name="Tytgat J."/>
            <person name="Arantes E.C."/>
        </authorList>
    </citation>
    <scope>PARTIAL PROTEIN SEQUENCE</scope>
    <scope>FUNCTION</scope>
    <scope>NOMENCLATURE</scope>
    <source>
        <tissue>Venom</tissue>
    </source>
</reference>
<reference key="6">
    <citation type="journal article" date="2003" name="Br. J. Pharmacol.">
        <title>Tityustoxin-K(alpha) blockade of the voltage-gated potassium channel Kv1.3.</title>
        <authorList>
            <person name="Rodrigues A.R."/>
            <person name="Arantes E.C."/>
            <person name="Monje F."/>
            <person name="Stuehmer W."/>
            <person name="Varanda W.A."/>
        </authorList>
    </citation>
    <scope>FUNCTION AS KV1.3 CHANNEL BLOCKER</scope>
    <scope>MASS SPECTROMETRY</scope>
</reference>
<reference key="7">
    <citation type="journal article" date="2008" name="Biochem. Pharmacol.">
        <title>A common 'hot spot' confers hERG blockade activity to alpha-scorpion toxins affecting K+ channels.</title>
        <authorList>
            <person name="Abdel-Mottaleb Y."/>
            <person name="Corzo G."/>
            <person name="Martin-Eauclaire M.F."/>
            <person name="Satake H."/>
            <person name="Ceard B."/>
            <person name="Peigneur S."/>
            <person name="Nambaru P."/>
            <person name="Bougis P.E."/>
            <person name="Possani L.D."/>
            <person name="Tytgat J."/>
        </authorList>
    </citation>
    <scope>PHARMACOLOGICAL CHARACTERIZATION</scope>
</reference>
<reference key="8">
    <citation type="journal article" date="2001" name="Biochemistry">
        <title>Interaction of a toxin from the scorpion Tityus serrulatus with a cloned K+ channel from squid (sqKv1A).</title>
        <authorList>
            <person name="Ellis K.C."/>
            <person name="Tenenholz T.C."/>
            <person name="Jerng H."/>
            <person name="Hayhurst M."/>
            <person name="Dudlak C.S."/>
            <person name="Gilly W.F."/>
            <person name="Blaustein M.P."/>
            <person name="Weber D.J."/>
        </authorList>
    </citation>
    <scope>STRUCTURE BY NMR OF 23-59</scope>
    <scope>DISULFIDE BONDS</scope>
    <scope>MUTAGENESIS OF LYS-49</scope>
</reference>
<accession>P46114</accession>
<accession>A0A7S8MUA9</accession>
<accession>P08816</accession>
<sequence>MKAFYGILIIFILISMIDLSKQVFINAKCRGSPECLPKCKEAIGKAAGKCMNGKCKCYP</sequence>
<comment type="function">
    <text evidence="4 6 7">Potently blocks Kv1.1/KCNA1 (85%), Kv1.2/KCNA2 (91%), Kv1.3/KCNA3 (89%), Kv1.6/KCNA6 (94%), and Shaker (97%).</text>
</comment>
<comment type="subcellular location">
    <subcellularLocation>
        <location evidence="7 8">Secreted</location>
    </subcellularLocation>
</comment>
<comment type="tissue specificity">
    <text evidence="12 13">Expressed by the venom gland.</text>
</comment>
<comment type="domain">
    <text>Has the structural arrangement of an alpha-helix connected to a beta-sheet by disulfide bonds (CSalpha/beta).</text>
</comment>
<comment type="mass spectrometry"/>
<comment type="miscellaneous">
    <text evidence="5 6">Negative results: inhibits with low efficiency Kv1.5/KCNA5, Kv2.1/KCNB1, Kv7.1/KCNQ1 and ERG/KCNH2. Does not inhibit Kv1.4/KCNA4, Kv3.1/KCNC1, Kv7.2/KCNQ2 (PubMed:24590385) and ERG1/Kv11.1/KCNH2 (PubMed:18687312).</text>
</comment>
<comment type="similarity">
    <text evidence="11">Belongs to the short scorpion toxin superfamily. Potassium channel inhibitor family. Alpha-KTx 04 subfamily.</text>
</comment>
<name>KAX41_TITSE</name>
<proteinExistence type="evidence at protein level"/>
<organism>
    <name type="scientific">Tityus serrulatus</name>
    <name type="common">Brazilian scorpion</name>
    <dbReference type="NCBI Taxonomy" id="6887"/>
    <lineage>
        <taxon>Eukaryota</taxon>
        <taxon>Metazoa</taxon>
        <taxon>Ecdysozoa</taxon>
        <taxon>Arthropoda</taxon>
        <taxon>Chelicerata</taxon>
        <taxon>Arachnida</taxon>
        <taxon>Scorpiones</taxon>
        <taxon>Buthida</taxon>
        <taxon>Buthoidea</taxon>
        <taxon>Buthidae</taxon>
        <taxon>Tityus</taxon>
    </lineage>
</organism>
<keyword id="KW-0002">3D-structure</keyword>
<keyword id="KW-0903">Direct protein sequencing</keyword>
<keyword id="KW-1015">Disulfide bond</keyword>
<keyword id="KW-0872">Ion channel impairing toxin</keyword>
<keyword id="KW-0528">Neurotoxin</keyword>
<keyword id="KW-0632">Potassium channel impairing toxin</keyword>
<keyword id="KW-0964">Secreted</keyword>
<keyword id="KW-0732">Signal</keyword>
<keyword id="KW-0800">Toxin</keyword>
<keyword id="KW-1220">Voltage-gated potassium channel impairing toxin</keyword>
<dbReference type="EMBL" id="MT450710">
    <property type="protein sequence ID" value="QPD99046.1"/>
    <property type="molecule type" value="mRNA"/>
</dbReference>
<dbReference type="PDB" id="1HP2">
    <property type="method" value="NMR"/>
    <property type="chains" value="A=23-59"/>
</dbReference>
<dbReference type="PDBsum" id="1HP2"/>
<dbReference type="SMR" id="P46114"/>
<dbReference type="EvolutionaryTrace" id="P46114"/>
<dbReference type="GO" id="GO:0005576">
    <property type="term" value="C:extracellular region"/>
    <property type="evidence" value="ECO:0007669"/>
    <property type="project" value="UniProtKB-SubCell"/>
</dbReference>
<dbReference type="GO" id="GO:0008200">
    <property type="term" value="F:ion channel inhibitor activity"/>
    <property type="evidence" value="ECO:0007669"/>
    <property type="project" value="InterPro"/>
</dbReference>
<dbReference type="GO" id="GO:0015459">
    <property type="term" value="F:potassium channel regulator activity"/>
    <property type="evidence" value="ECO:0007669"/>
    <property type="project" value="UniProtKB-KW"/>
</dbReference>
<dbReference type="GO" id="GO:0090729">
    <property type="term" value="F:toxin activity"/>
    <property type="evidence" value="ECO:0007669"/>
    <property type="project" value="UniProtKB-KW"/>
</dbReference>
<dbReference type="FunFam" id="3.30.30.10:FF:000009">
    <property type="entry name" value="Potassium channel toxin alpha-KTx 4.3"/>
    <property type="match status" value="1"/>
</dbReference>
<dbReference type="Gene3D" id="3.30.30.10">
    <property type="entry name" value="Knottin, scorpion toxin-like"/>
    <property type="match status" value="1"/>
</dbReference>
<dbReference type="InterPro" id="IPR036574">
    <property type="entry name" value="Scorpion_toxin-like_sf"/>
</dbReference>
<dbReference type="InterPro" id="IPR001947">
    <property type="entry name" value="Scorpion_toxinS_K_inh"/>
</dbReference>
<dbReference type="Pfam" id="PF00451">
    <property type="entry name" value="Toxin_2"/>
    <property type="match status" value="1"/>
</dbReference>
<dbReference type="PRINTS" id="PR00286">
    <property type="entry name" value="CHARYBDTOXIN"/>
</dbReference>
<dbReference type="SUPFAM" id="SSF57095">
    <property type="entry name" value="Scorpion toxin-like"/>
    <property type="match status" value="1"/>
</dbReference>
<dbReference type="PROSITE" id="PS01138">
    <property type="entry name" value="SCORP_SHORT_TOXIN"/>
    <property type="match status" value="1"/>
</dbReference>
<feature type="signal peptide" evidence="12 13">
    <location>
        <begin position="1"/>
        <end position="22"/>
    </location>
</feature>
<feature type="peptide" id="PRO_0000044923" description="Potassium channel toxin alpha-KTx 4.1" evidence="7">
    <location>
        <begin position="23"/>
        <end position="59"/>
    </location>
</feature>
<feature type="region of interest" description="Interaction with Ca(2+)-activated K(+) channels" evidence="2">
    <location>
        <begin position="48"/>
        <end position="55"/>
    </location>
</feature>
<feature type="site" description="Basic residue of the functional dyad" evidence="1">
    <location>
        <position position="49"/>
    </location>
</feature>
<feature type="site" description="Aromatic residue of the functional dyad" evidence="1">
    <location>
        <position position="58"/>
    </location>
</feature>
<feature type="disulfide bond" evidence="3 15">
    <location>
        <begin position="29"/>
        <end position="50"/>
    </location>
</feature>
<feature type="disulfide bond" evidence="3 15">
    <location>
        <begin position="35"/>
        <end position="55"/>
    </location>
</feature>
<feature type="disulfide bond" evidence="3 15">
    <location>
        <begin position="39"/>
        <end position="57"/>
    </location>
</feature>
<feature type="mutagenesis site" description="Significant loss of affinity for squid Kv1A channel." evidence="3">
    <original>K</original>
    <variation>A</variation>
    <variation>E</variation>
    <variation>R</variation>
    <location>
        <position position="49"/>
    </location>
</feature>
<feature type="helix" evidence="16">
    <location>
        <begin position="32"/>
        <end position="42"/>
    </location>
</feature>
<feature type="strand" evidence="16">
    <location>
        <begin position="48"/>
        <end position="51"/>
    </location>
</feature>
<feature type="strand" evidence="16">
    <location>
        <begin position="54"/>
        <end position="57"/>
    </location>
</feature>
<evidence type="ECO:0000250" key="1">
    <source>
        <dbReference type="UniProtKB" id="O46028"/>
    </source>
</evidence>
<evidence type="ECO:0000255" key="2"/>
<evidence type="ECO:0000269" key="3">
    <source>
    </source>
</evidence>
<evidence type="ECO:0000269" key="4">
    <source>
    </source>
</evidence>
<evidence type="ECO:0000269" key="5">
    <source>
    </source>
</evidence>
<evidence type="ECO:0000269" key="6">
    <source>
    </source>
</evidence>
<evidence type="ECO:0000269" key="7">
    <source>
    </source>
</evidence>
<evidence type="ECO:0000269" key="8">
    <source ref="4"/>
</evidence>
<evidence type="ECO:0000303" key="9">
    <source>
    </source>
</evidence>
<evidence type="ECO:0000303" key="10">
    <source>
    </source>
</evidence>
<evidence type="ECO:0000305" key="11"/>
<evidence type="ECO:0000305" key="12">
    <source>
    </source>
</evidence>
<evidence type="ECO:0000305" key="13">
    <source ref="4"/>
</evidence>
<evidence type="ECO:0000312" key="14">
    <source>
        <dbReference type="EMBL" id="QPD99046.1"/>
    </source>
</evidence>
<evidence type="ECO:0000312" key="15">
    <source>
        <dbReference type="PDB" id="1HP2"/>
    </source>
</evidence>
<evidence type="ECO:0007829" key="16">
    <source>
        <dbReference type="PDB" id="1HP2"/>
    </source>
</evidence>
<protein>
    <recommendedName>
        <fullName evidence="9">Potassium channel toxin alpha-KTx 4.1</fullName>
    </recommendedName>
    <alternativeName>
        <fullName evidence="10">TSK4</fullName>
    </alternativeName>
    <alternativeName>
        <fullName evidence="10">Tityustoxin K-alpha</fullName>
        <shortName evidence="10">TsTX-K-alpha</shortName>
        <shortName evidence="11">TyKalpha</shortName>
    </alternativeName>
    <alternativeName>
        <fullName evidence="11">Tityustoxin-7</fullName>
        <shortName evidence="9">Ts7</shortName>
    </alternativeName>
    <alternativeName>
        <fullName>Toxin II-9</fullName>
    </alternativeName>
</protein>